<comment type="function">
    <text evidence="1">Lytic transglycosylase with a strong preference for naked glycan strands that lack stem peptides.</text>
</comment>
<comment type="similarity">
    <text evidence="1">Belongs to the RlpA family.</text>
</comment>
<sequence>MKLKTGLNLTALLLFMISVAFPAQADTQKMYGIRGDNLSIATQMPAPRTYSVKGQTYTTKSGNEAKSYIKEGLASYYHLKFDGRKTASGDVYNSKQFTAAHKTLPINSYALVTNLHNNRKVIVRINDRGPFSDKRLIDLSHAAAKEIGLISRGIGQVRIEALHVAKNGNLSGAATKTLAKQAKTQEAADRLVLKSNTLFDNTSKSINALKGTEFYCLKMLELTSRSQANKLITQLALANIQTEVNRSGNKYEIYIGPFDDKTKMAQVRTKLQKMANNKPLIVYTYKN</sequence>
<evidence type="ECO:0000255" key="1">
    <source>
        <dbReference type="HAMAP-Rule" id="MF_02071"/>
    </source>
</evidence>
<dbReference type="EC" id="4.2.2.-" evidence="1"/>
<dbReference type="EMBL" id="L42023">
    <property type="protein sequence ID" value="AAC21708.1"/>
    <property type="molecule type" value="Genomic_DNA"/>
</dbReference>
<dbReference type="PIR" id="A64044">
    <property type="entry name" value="A64044"/>
</dbReference>
<dbReference type="RefSeq" id="NP_438203.1">
    <property type="nucleotide sequence ID" value="NC_000907.1"/>
</dbReference>
<dbReference type="SMR" id="Q57092"/>
<dbReference type="STRING" id="71421.HI_0030"/>
<dbReference type="EnsemblBacteria" id="AAC21708">
    <property type="protein sequence ID" value="AAC21708"/>
    <property type="gene ID" value="HI_0030"/>
</dbReference>
<dbReference type="KEGG" id="hin:HI_0030"/>
<dbReference type="PATRIC" id="fig|71421.8.peg.30"/>
<dbReference type="eggNOG" id="COG0797">
    <property type="taxonomic scope" value="Bacteria"/>
</dbReference>
<dbReference type="eggNOG" id="COG3087">
    <property type="taxonomic scope" value="Bacteria"/>
</dbReference>
<dbReference type="HOGENOM" id="CLU_042923_3_1_6"/>
<dbReference type="OrthoDB" id="9779128at2"/>
<dbReference type="PhylomeDB" id="Q57092"/>
<dbReference type="BioCyc" id="HINF71421:G1GJ1-30-MONOMER"/>
<dbReference type="Proteomes" id="UP000000579">
    <property type="component" value="Chromosome"/>
</dbReference>
<dbReference type="GO" id="GO:0009279">
    <property type="term" value="C:cell outer membrane"/>
    <property type="evidence" value="ECO:0000318"/>
    <property type="project" value="GO_Central"/>
</dbReference>
<dbReference type="GO" id="GO:0008932">
    <property type="term" value="F:lytic endotransglycosylase activity"/>
    <property type="evidence" value="ECO:0007669"/>
    <property type="project" value="UniProtKB-UniRule"/>
</dbReference>
<dbReference type="GO" id="GO:0042834">
    <property type="term" value="F:peptidoglycan binding"/>
    <property type="evidence" value="ECO:0007669"/>
    <property type="project" value="InterPro"/>
</dbReference>
<dbReference type="GO" id="GO:0071555">
    <property type="term" value="P:cell wall organization"/>
    <property type="evidence" value="ECO:0007669"/>
    <property type="project" value="UniProtKB-KW"/>
</dbReference>
<dbReference type="GO" id="GO:0000270">
    <property type="term" value="P:peptidoglycan metabolic process"/>
    <property type="evidence" value="ECO:0007669"/>
    <property type="project" value="UniProtKB-UniRule"/>
</dbReference>
<dbReference type="CDD" id="cd22268">
    <property type="entry name" value="DPBB_RlpA-like"/>
    <property type="match status" value="1"/>
</dbReference>
<dbReference type="Gene3D" id="2.40.40.10">
    <property type="entry name" value="RlpA-like domain"/>
    <property type="match status" value="1"/>
</dbReference>
<dbReference type="Gene3D" id="3.30.70.1070">
    <property type="entry name" value="Sporulation related repeat"/>
    <property type="match status" value="1"/>
</dbReference>
<dbReference type="HAMAP" id="MF_02071">
    <property type="entry name" value="RlpA"/>
    <property type="match status" value="1"/>
</dbReference>
<dbReference type="InterPro" id="IPR034718">
    <property type="entry name" value="RlpA"/>
</dbReference>
<dbReference type="InterPro" id="IPR009009">
    <property type="entry name" value="RlpA-like_DPBB"/>
</dbReference>
<dbReference type="InterPro" id="IPR036908">
    <property type="entry name" value="RlpA-like_sf"/>
</dbReference>
<dbReference type="InterPro" id="IPR012997">
    <property type="entry name" value="RplA"/>
</dbReference>
<dbReference type="InterPro" id="IPR007730">
    <property type="entry name" value="SPOR-like_dom"/>
</dbReference>
<dbReference type="InterPro" id="IPR036680">
    <property type="entry name" value="SPOR-like_sf"/>
</dbReference>
<dbReference type="NCBIfam" id="TIGR00413">
    <property type="entry name" value="rlpA"/>
    <property type="match status" value="1"/>
</dbReference>
<dbReference type="PANTHER" id="PTHR34183">
    <property type="entry name" value="ENDOLYTIC PEPTIDOGLYCAN TRANSGLYCOSYLASE RLPA"/>
    <property type="match status" value="1"/>
</dbReference>
<dbReference type="PANTHER" id="PTHR34183:SF1">
    <property type="entry name" value="ENDOLYTIC PEPTIDOGLYCAN TRANSGLYCOSYLASE RLPA"/>
    <property type="match status" value="1"/>
</dbReference>
<dbReference type="Pfam" id="PF03330">
    <property type="entry name" value="DPBB_1"/>
    <property type="match status" value="1"/>
</dbReference>
<dbReference type="Pfam" id="PF05036">
    <property type="entry name" value="SPOR"/>
    <property type="match status" value="1"/>
</dbReference>
<dbReference type="SUPFAM" id="SSF50685">
    <property type="entry name" value="Barwin-like endoglucanases"/>
    <property type="match status" value="1"/>
</dbReference>
<dbReference type="SUPFAM" id="SSF110997">
    <property type="entry name" value="Sporulation related repeat"/>
    <property type="match status" value="1"/>
</dbReference>
<dbReference type="PROSITE" id="PS51724">
    <property type="entry name" value="SPOR"/>
    <property type="match status" value="1"/>
</dbReference>
<protein>
    <recommendedName>
        <fullName evidence="1">Endolytic peptidoglycan transglycosylase RlpA</fullName>
        <ecNumber evidence="1">4.2.2.-</ecNumber>
    </recommendedName>
</protein>
<organism>
    <name type="scientific">Haemophilus influenzae (strain ATCC 51907 / DSM 11121 / KW20 / Rd)</name>
    <dbReference type="NCBI Taxonomy" id="71421"/>
    <lineage>
        <taxon>Bacteria</taxon>
        <taxon>Pseudomonadati</taxon>
        <taxon>Pseudomonadota</taxon>
        <taxon>Gammaproteobacteria</taxon>
        <taxon>Pasteurellales</taxon>
        <taxon>Pasteurellaceae</taxon>
        <taxon>Haemophilus</taxon>
    </lineage>
</organism>
<gene>
    <name evidence="1" type="primary">rlpA</name>
    <name type="ordered locus">HI_0030</name>
</gene>
<keyword id="KW-0961">Cell wall biogenesis/degradation</keyword>
<keyword id="KW-0456">Lyase</keyword>
<keyword id="KW-1185">Reference proteome</keyword>
<keyword id="KW-0732">Signal</keyword>
<feature type="signal peptide" evidence="1">
    <location>
        <begin position="1"/>
        <end position="25"/>
    </location>
</feature>
<feature type="chain" id="PRO_0000030803" description="Endolytic peptidoglycan transglycosylase RlpA" evidence="1">
    <location>
        <begin position="26"/>
        <end position="287"/>
    </location>
</feature>
<feature type="domain" description="SPOR" evidence="1">
    <location>
        <begin position="209"/>
        <end position="284"/>
    </location>
</feature>
<name>RLPA_HAEIN</name>
<reference key="1">
    <citation type="journal article" date="1995" name="Science">
        <title>Whole-genome random sequencing and assembly of Haemophilus influenzae Rd.</title>
        <authorList>
            <person name="Fleischmann R.D."/>
            <person name="Adams M.D."/>
            <person name="White O."/>
            <person name="Clayton R.A."/>
            <person name="Kirkness E.F."/>
            <person name="Kerlavage A.R."/>
            <person name="Bult C.J."/>
            <person name="Tomb J.-F."/>
            <person name="Dougherty B.A."/>
            <person name="Merrick J.M."/>
            <person name="McKenney K."/>
            <person name="Sutton G.G."/>
            <person name="FitzHugh W."/>
            <person name="Fields C.A."/>
            <person name="Gocayne J.D."/>
            <person name="Scott J.D."/>
            <person name="Shirley R."/>
            <person name="Liu L.-I."/>
            <person name="Glodek A."/>
            <person name="Kelley J.M."/>
            <person name="Weidman J.F."/>
            <person name="Phillips C.A."/>
            <person name="Spriggs T."/>
            <person name="Hedblom E."/>
            <person name="Cotton M.D."/>
            <person name="Utterback T.R."/>
            <person name="Hanna M.C."/>
            <person name="Nguyen D.T."/>
            <person name="Saudek D.M."/>
            <person name="Brandon R.C."/>
            <person name="Fine L.D."/>
            <person name="Fritchman J.L."/>
            <person name="Fuhrmann J.L."/>
            <person name="Geoghagen N.S.M."/>
            <person name="Gnehm C.L."/>
            <person name="McDonald L.A."/>
            <person name="Small K.V."/>
            <person name="Fraser C.M."/>
            <person name="Smith H.O."/>
            <person name="Venter J.C."/>
        </authorList>
    </citation>
    <scope>NUCLEOTIDE SEQUENCE [LARGE SCALE GENOMIC DNA]</scope>
    <source>
        <strain>ATCC 51907 / DSM 11121 / KW20 / Rd</strain>
    </source>
</reference>
<reference key="2">
    <citation type="journal article" date="2000" name="Electrophoresis">
        <title>Two-dimensional map of the proteome of Haemophilus influenzae.</title>
        <authorList>
            <person name="Langen H."/>
            <person name="Takacs B."/>
            <person name="Evers S."/>
            <person name="Berndt P."/>
            <person name="Lahm H.W."/>
            <person name="Wipf B."/>
            <person name="Gray C."/>
            <person name="Fountoulakis M."/>
        </authorList>
    </citation>
    <scope>IDENTIFICATION BY MASS SPECTROMETRY</scope>
    <source>
        <strain>ATCC 51907 / DSM 11121 / KW20 / Rd</strain>
    </source>
</reference>
<accession>Q57092</accession>
<accession>O05005</accession>
<proteinExistence type="evidence at protein level"/>